<dbReference type="EMBL" id="CP001322">
    <property type="protein sequence ID" value="ACL06126.1"/>
    <property type="molecule type" value="Genomic_DNA"/>
</dbReference>
<dbReference type="RefSeq" id="WP_015949172.1">
    <property type="nucleotide sequence ID" value="NC_011768.1"/>
</dbReference>
<dbReference type="KEGG" id="dal:Dalk_4447"/>
<dbReference type="eggNOG" id="COG3681">
    <property type="taxonomic scope" value="Bacteria"/>
</dbReference>
<dbReference type="HOGENOM" id="CLU_051840_0_0_7"/>
<dbReference type="Proteomes" id="UP000000739">
    <property type="component" value="Chromosome"/>
</dbReference>
<dbReference type="GO" id="GO:0080146">
    <property type="term" value="F:L-cysteine desulfhydrase activity"/>
    <property type="evidence" value="ECO:0007669"/>
    <property type="project" value="TreeGrafter"/>
</dbReference>
<dbReference type="GO" id="GO:0019450">
    <property type="term" value="P:L-cysteine catabolic process to pyruvate"/>
    <property type="evidence" value="ECO:0007669"/>
    <property type="project" value="TreeGrafter"/>
</dbReference>
<dbReference type="HAMAP" id="MF_01845">
    <property type="entry name" value="UPF0597"/>
    <property type="match status" value="1"/>
</dbReference>
<dbReference type="InterPro" id="IPR005130">
    <property type="entry name" value="Ser_deHydtase-like_asu"/>
</dbReference>
<dbReference type="InterPro" id="IPR021144">
    <property type="entry name" value="UPF0597"/>
</dbReference>
<dbReference type="PANTHER" id="PTHR30501">
    <property type="entry name" value="UPF0597 PROTEIN YHAM"/>
    <property type="match status" value="1"/>
</dbReference>
<dbReference type="PANTHER" id="PTHR30501:SF2">
    <property type="entry name" value="UPF0597 PROTEIN YHAM"/>
    <property type="match status" value="1"/>
</dbReference>
<dbReference type="Pfam" id="PF03313">
    <property type="entry name" value="SDH_alpha"/>
    <property type="match status" value="1"/>
</dbReference>
<dbReference type="PIRSF" id="PIRSF006054">
    <property type="entry name" value="UCP006054"/>
    <property type="match status" value="1"/>
</dbReference>
<name>Y4447_DESAL</name>
<proteinExistence type="inferred from homology"/>
<sequence>MAFTVKDILSIQVAPALGCTEPAAVALCAAAAASLLPEKASIEALEVRVDPNIFKNGLAVLIPGTEGLSGLDMAAALGAIGGNPAKSLEVLGEVNPEHVKQAQALIKDGKIRLNLLADHKGLFIKVIVNAGENMAEAVVESMHDNITRMALDGVPVEKSSLIAPKESSKNARAAELESWLKGLGLKHLMDLLDDLDDEDLAFLEEGLDANMKLADYGLKHGPGLGVGKTLDRLMRQRLIARDMILDARILASAAADARMAGVNLPAMSSAGSGNHGLTAILPIKAVHKYLESDHESMLRAIGLSHIVTAFVKAFTGRLSAVCGCSVAAGAGATAGVTYLMGGNANHIADAIKNLMEDLAGIICDGAKSGCAFKLSTAAGTAVQAALFALQGVKVMETDGIIGASLEKTTQNLGALSTEGMIETDRTILKIMLEKQFSPD</sequence>
<accession>B8FNF7</accession>
<gene>
    <name type="ordered locus">Dalk_4447</name>
</gene>
<keyword id="KW-1185">Reference proteome</keyword>
<reference key="1">
    <citation type="journal article" date="2012" name="Environ. Microbiol.">
        <title>The genome sequence of Desulfatibacillum alkenivorans AK-01: a blueprint for anaerobic alkane oxidation.</title>
        <authorList>
            <person name="Callaghan A.V."/>
            <person name="Morris B.E."/>
            <person name="Pereira I.A."/>
            <person name="McInerney M.J."/>
            <person name="Austin R.N."/>
            <person name="Groves J.T."/>
            <person name="Kukor J.J."/>
            <person name="Suflita J.M."/>
            <person name="Young L.Y."/>
            <person name="Zylstra G.J."/>
            <person name="Wawrik B."/>
        </authorList>
    </citation>
    <scope>NUCLEOTIDE SEQUENCE [LARGE SCALE GENOMIC DNA]</scope>
    <source>
        <strain>AK-01</strain>
    </source>
</reference>
<protein>
    <recommendedName>
        <fullName evidence="1">UPF0597 protein Dalk_4447</fullName>
    </recommendedName>
</protein>
<organism>
    <name type="scientific">Desulfatibacillum aliphaticivorans</name>
    <dbReference type="NCBI Taxonomy" id="218208"/>
    <lineage>
        <taxon>Bacteria</taxon>
        <taxon>Pseudomonadati</taxon>
        <taxon>Thermodesulfobacteriota</taxon>
        <taxon>Desulfobacteria</taxon>
        <taxon>Desulfobacterales</taxon>
        <taxon>Desulfatibacillaceae</taxon>
        <taxon>Desulfatibacillum</taxon>
    </lineage>
</organism>
<feature type="chain" id="PRO_1000188448" description="UPF0597 protein Dalk_4447">
    <location>
        <begin position="1"/>
        <end position="439"/>
    </location>
</feature>
<comment type="similarity">
    <text evidence="1">Belongs to the UPF0597 family.</text>
</comment>
<evidence type="ECO:0000255" key="1">
    <source>
        <dbReference type="HAMAP-Rule" id="MF_01845"/>
    </source>
</evidence>